<protein>
    <recommendedName>
        <fullName evidence="1">4-hydroxy-tetrahydrodipicolinate reductase</fullName>
        <shortName evidence="1">HTPA reductase</shortName>
        <ecNumber evidence="1">1.17.1.8</ecNumber>
    </recommendedName>
</protein>
<keyword id="KW-0028">Amino-acid biosynthesis</keyword>
<keyword id="KW-0963">Cytoplasm</keyword>
<keyword id="KW-0220">Diaminopimelate biosynthesis</keyword>
<keyword id="KW-0457">Lysine biosynthesis</keyword>
<keyword id="KW-0520">NAD</keyword>
<keyword id="KW-0521">NADP</keyword>
<keyword id="KW-0560">Oxidoreductase</keyword>
<keyword id="KW-1185">Reference proteome</keyword>
<organism>
    <name type="scientific">Methylococcus capsulatus (strain ATCC 33009 / NCIMB 11132 / Bath)</name>
    <dbReference type="NCBI Taxonomy" id="243233"/>
    <lineage>
        <taxon>Bacteria</taxon>
        <taxon>Pseudomonadati</taxon>
        <taxon>Pseudomonadota</taxon>
        <taxon>Gammaproteobacteria</taxon>
        <taxon>Methylococcales</taxon>
        <taxon>Methylococcaceae</taxon>
        <taxon>Methylococcus</taxon>
    </lineage>
</organism>
<sequence length="269" mass="28010">MVIRTGIAGVAGRMGGNLVRACLADPAVELTAAIARPGSPVVGRDAGELAGLSAIGLPVVGNLSEVSDKVDVLIDFTLPEVTLAHLESCRSAGIRLVIGTTGFSAEQRQLIAAAAEGMGIVFAPNMSVGVNLALKLLDIAARVVGEHADIEIVEAHHRHKIDAPSGTALRMGEVVAKALGRNLQDCAIYGREGITGIRDAKTIGFSTIRAGDIVGEHTVMFADEGERIEITHKASSRMTFAKGAVRAAVWLMSQGEGLFDMQDVLGLKG</sequence>
<proteinExistence type="inferred from homology"/>
<name>DAPB_METCA</name>
<evidence type="ECO:0000255" key="1">
    <source>
        <dbReference type="HAMAP-Rule" id="MF_00102"/>
    </source>
</evidence>
<evidence type="ECO:0000305" key="2"/>
<reference key="1">
    <citation type="journal article" date="2004" name="PLoS Biol.">
        <title>Genomic insights into methanotrophy: the complete genome sequence of Methylococcus capsulatus (Bath).</title>
        <authorList>
            <person name="Ward N.L."/>
            <person name="Larsen O."/>
            <person name="Sakwa J."/>
            <person name="Bruseth L."/>
            <person name="Khouri H.M."/>
            <person name="Durkin A.S."/>
            <person name="Dimitrov G."/>
            <person name="Jiang L."/>
            <person name="Scanlan D."/>
            <person name="Kang K.H."/>
            <person name="Lewis M.R."/>
            <person name="Nelson K.E."/>
            <person name="Methe B.A."/>
            <person name="Wu M."/>
            <person name="Heidelberg J.F."/>
            <person name="Paulsen I.T."/>
            <person name="Fouts D.E."/>
            <person name="Ravel J."/>
            <person name="Tettelin H."/>
            <person name="Ren Q."/>
            <person name="Read T.D."/>
            <person name="DeBoy R.T."/>
            <person name="Seshadri R."/>
            <person name="Salzberg S.L."/>
            <person name="Jensen H.B."/>
            <person name="Birkeland N.K."/>
            <person name="Nelson W.C."/>
            <person name="Dodson R.J."/>
            <person name="Grindhaug S.H."/>
            <person name="Holt I.E."/>
            <person name="Eidhammer I."/>
            <person name="Jonasen I."/>
            <person name="Vanaken S."/>
            <person name="Utterback T.R."/>
            <person name="Feldblyum T.V."/>
            <person name="Fraser C.M."/>
            <person name="Lillehaug J.R."/>
            <person name="Eisen J.A."/>
        </authorList>
    </citation>
    <scope>NUCLEOTIDE SEQUENCE [LARGE SCALE GENOMIC DNA]</scope>
    <source>
        <strain>ATCC 33009 / NCIMB 11132 / Bath</strain>
    </source>
</reference>
<comment type="function">
    <text evidence="1">Catalyzes the conversion of 4-hydroxy-tetrahydrodipicolinate (HTPA) to tetrahydrodipicolinate.</text>
</comment>
<comment type="catalytic activity">
    <reaction evidence="1">
        <text>(S)-2,3,4,5-tetrahydrodipicolinate + NAD(+) + H2O = (2S,4S)-4-hydroxy-2,3,4,5-tetrahydrodipicolinate + NADH + H(+)</text>
        <dbReference type="Rhea" id="RHEA:35323"/>
        <dbReference type="ChEBI" id="CHEBI:15377"/>
        <dbReference type="ChEBI" id="CHEBI:15378"/>
        <dbReference type="ChEBI" id="CHEBI:16845"/>
        <dbReference type="ChEBI" id="CHEBI:57540"/>
        <dbReference type="ChEBI" id="CHEBI:57945"/>
        <dbReference type="ChEBI" id="CHEBI:67139"/>
        <dbReference type="EC" id="1.17.1.8"/>
    </reaction>
</comment>
<comment type="catalytic activity">
    <reaction evidence="1">
        <text>(S)-2,3,4,5-tetrahydrodipicolinate + NADP(+) + H2O = (2S,4S)-4-hydroxy-2,3,4,5-tetrahydrodipicolinate + NADPH + H(+)</text>
        <dbReference type="Rhea" id="RHEA:35331"/>
        <dbReference type="ChEBI" id="CHEBI:15377"/>
        <dbReference type="ChEBI" id="CHEBI:15378"/>
        <dbReference type="ChEBI" id="CHEBI:16845"/>
        <dbReference type="ChEBI" id="CHEBI:57783"/>
        <dbReference type="ChEBI" id="CHEBI:58349"/>
        <dbReference type="ChEBI" id="CHEBI:67139"/>
        <dbReference type="EC" id="1.17.1.8"/>
    </reaction>
</comment>
<comment type="pathway">
    <text evidence="1">Amino-acid biosynthesis; L-lysine biosynthesis via DAP pathway; (S)-tetrahydrodipicolinate from L-aspartate: step 4/4.</text>
</comment>
<comment type="subcellular location">
    <subcellularLocation>
        <location evidence="1">Cytoplasm</location>
    </subcellularLocation>
</comment>
<comment type="similarity">
    <text evidence="1">Belongs to the DapB family.</text>
</comment>
<comment type="caution">
    <text evidence="2">Was originally thought to be a dihydrodipicolinate reductase (DHDPR), catalyzing the conversion of dihydrodipicolinate to tetrahydrodipicolinate. However, it was shown in E.coli that the substrate of the enzymatic reaction is not dihydrodipicolinate (DHDP) but in fact (2S,4S)-4-hydroxy-2,3,4,5-tetrahydrodipicolinic acid (HTPA), the product released by the DapA-catalyzed reaction.</text>
</comment>
<dbReference type="EC" id="1.17.1.8" evidence="1"/>
<dbReference type="EMBL" id="AE017282">
    <property type="protein sequence ID" value="AAU91909.1"/>
    <property type="molecule type" value="Genomic_DNA"/>
</dbReference>
<dbReference type="RefSeq" id="WP_010961106.1">
    <property type="nucleotide sequence ID" value="NC_002977.6"/>
</dbReference>
<dbReference type="SMR" id="Q607A7"/>
<dbReference type="STRING" id="243233.MCA1854"/>
<dbReference type="GeneID" id="88224099"/>
<dbReference type="KEGG" id="mca:MCA1854"/>
<dbReference type="eggNOG" id="COG0289">
    <property type="taxonomic scope" value="Bacteria"/>
</dbReference>
<dbReference type="HOGENOM" id="CLU_047479_2_1_6"/>
<dbReference type="UniPathway" id="UPA00034">
    <property type="reaction ID" value="UER00018"/>
</dbReference>
<dbReference type="Proteomes" id="UP000006821">
    <property type="component" value="Chromosome"/>
</dbReference>
<dbReference type="GO" id="GO:0005829">
    <property type="term" value="C:cytosol"/>
    <property type="evidence" value="ECO:0007669"/>
    <property type="project" value="TreeGrafter"/>
</dbReference>
<dbReference type="GO" id="GO:0008839">
    <property type="term" value="F:4-hydroxy-tetrahydrodipicolinate reductase"/>
    <property type="evidence" value="ECO:0007669"/>
    <property type="project" value="UniProtKB-EC"/>
</dbReference>
<dbReference type="GO" id="GO:0051287">
    <property type="term" value="F:NAD binding"/>
    <property type="evidence" value="ECO:0007669"/>
    <property type="project" value="UniProtKB-UniRule"/>
</dbReference>
<dbReference type="GO" id="GO:0050661">
    <property type="term" value="F:NADP binding"/>
    <property type="evidence" value="ECO:0007669"/>
    <property type="project" value="UniProtKB-UniRule"/>
</dbReference>
<dbReference type="GO" id="GO:0016726">
    <property type="term" value="F:oxidoreductase activity, acting on CH or CH2 groups, NAD or NADP as acceptor"/>
    <property type="evidence" value="ECO:0007669"/>
    <property type="project" value="UniProtKB-UniRule"/>
</dbReference>
<dbReference type="GO" id="GO:0019877">
    <property type="term" value="P:diaminopimelate biosynthetic process"/>
    <property type="evidence" value="ECO:0007669"/>
    <property type="project" value="UniProtKB-UniRule"/>
</dbReference>
<dbReference type="GO" id="GO:0009089">
    <property type="term" value="P:lysine biosynthetic process via diaminopimelate"/>
    <property type="evidence" value="ECO:0007669"/>
    <property type="project" value="UniProtKB-UniRule"/>
</dbReference>
<dbReference type="CDD" id="cd02274">
    <property type="entry name" value="DHDPR_N"/>
    <property type="match status" value="1"/>
</dbReference>
<dbReference type="FunFam" id="3.30.360.10:FF:000004">
    <property type="entry name" value="4-hydroxy-tetrahydrodipicolinate reductase"/>
    <property type="match status" value="1"/>
</dbReference>
<dbReference type="FunFam" id="3.40.50.720:FF:000048">
    <property type="entry name" value="4-hydroxy-tetrahydrodipicolinate reductase"/>
    <property type="match status" value="1"/>
</dbReference>
<dbReference type="Gene3D" id="3.30.360.10">
    <property type="entry name" value="Dihydrodipicolinate Reductase, domain 2"/>
    <property type="match status" value="1"/>
</dbReference>
<dbReference type="Gene3D" id="3.40.50.720">
    <property type="entry name" value="NAD(P)-binding Rossmann-like Domain"/>
    <property type="match status" value="1"/>
</dbReference>
<dbReference type="HAMAP" id="MF_00102">
    <property type="entry name" value="DapB"/>
    <property type="match status" value="1"/>
</dbReference>
<dbReference type="InterPro" id="IPR022663">
    <property type="entry name" value="DapB_C"/>
</dbReference>
<dbReference type="InterPro" id="IPR000846">
    <property type="entry name" value="DapB_N"/>
</dbReference>
<dbReference type="InterPro" id="IPR022664">
    <property type="entry name" value="DapB_N_CS"/>
</dbReference>
<dbReference type="InterPro" id="IPR023940">
    <property type="entry name" value="DHDPR_bac"/>
</dbReference>
<dbReference type="InterPro" id="IPR036291">
    <property type="entry name" value="NAD(P)-bd_dom_sf"/>
</dbReference>
<dbReference type="NCBIfam" id="TIGR00036">
    <property type="entry name" value="dapB"/>
    <property type="match status" value="1"/>
</dbReference>
<dbReference type="PANTHER" id="PTHR20836:SF0">
    <property type="entry name" value="4-HYDROXY-TETRAHYDRODIPICOLINATE REDUCTASE 1, CHLOROPLASTIC-RELATED"/>
    <property type="match status" value="1"/>
</dbReference>
<dbReference type="PANTHER" id="PTHR20836">
    <property type="entry name" value="DIHYDRODIPICOLINATE REDUCTASE"/>
    <property type="match status" value="1"/>
</dbReference>
<dbReference type="Pfam" id="PF05173">
    <property type="entry name" value="DapB_C"/>
    <property type="match status" value="1"/>
</dbReference>
<dbReference type="Pfam" id="PF01113">
    <property type="entry name" value="DapB_N"/>
    <property type="match status" value="1"/>
</dbReference>
<dbReference type="PIRSF" id="PIRSF000161">
    <property type="entry name" value="DHPR"/>
    <property type="match status" value="1"/>
</dbReference>
<dbReference type="SUPFAM" id="SSF55347">
    <property type="entry name" value="Glyceraldehyde-3-phosphate dehydrogenase-like, C-terminal domain"/>
    <property type="match status" value="1"/>
</dbReference>
<dbReference type="SUPFAM" id="SSF51735">
    <property type="entry name" value="NAD(P)-binding Rossmann-fold domains"/>
    <property type="match status" value="1"/>
</dbReference>
<dbReference type="PROSITE" id="PS01298">
    <property type="entry name" value="DAPB"/>
    <property type="match status" value="1"/>
</dbReference>
<gene>
    <name evidence="1" type="primary">dapB</name>
    <name type="ordered locus">MCA1854</name>
</gene>
<accession>Q607A7</accession>
<feature type="chain" id="PRO_0000228362" description="4-hydroxy-tetrahydrodipicolinate reductase">
    <location>
        <begin position="1"/>
        <end position="269"/>
    </location>
</feature>
<feature type="active site" description="Proton donor/acceptor" evidence="1">
    <location>
        <position position="156"/>
    </location>
</feature>
<feature type="active site" description="Proton donor" evidence="1">
    <location>
        <position position="160"/>
    </location>
</feature>
<feature type="binding site" evidence="1">
    <location>
        <begin position="9"/>
        <end position="14"/>
    </location>
    <ligand>
        <name>NAD(+)</name>
        <dbReference type="ChEBI" id="CHEBI:57540"/>
    </ligand>
</feature>
<feature type="binding site" evidence="1">
    <location>
        <position position="36"/>
    </location>
    <ligand>
        <name>NADP(+)</name>
        <dbReference type="ChEBI" id="CHEBI:58349"/>
    </ligand>
</feature>
<feature type="binding site" evidence="1">
    <location>
        <begin position="99"/>
        <end position="101"/>
    </location>
    <ligand>
        <name>NAD(+)</name>
        <dbReference type="ChEBI" id="CHEBI:57540"/>
    </ligand>
</feature>
<feature type="binding site" evidence="1">
    <location>
        <begin position="123"/>
        <end position="126"/>
    </location>
    <ligand>
        <name>NAD(+)</name>
        <dbReference type="ChEBI" id="CHEBI:57540"/>
    </ligand>
</feature>
<feature type="binding site" evidence="1">
    <location>
        <position position="157"/>
    </location>
    <ligand>
        <name>(S)-2,3,4,5-tetrahydrodipicolinate</name>
        <dbReference type="ChEBI" id="CHEBI:16845"/>
    </ligand>
</feature>
<feature type="binding site" evidence="1">
    <location>
        <begin position="166"/>
        <end position="167"/>
    </location>
    <ligand>
        <name>(S)-2,3,4,5-tetrahydrodipicolinate</name>
        <dbReference type="ChEBI" id="CHEBI:16845"/>
    </ligand>
</feature>